<name>GATA_BACC4</name>
<feature type="chain" id="PRO_1000117605" description="Glutamyl-tRNA(Gln) amidotransferase subunit A">
    <location>
        <begin position="1"/>
        <end position="485"/>
    </location>
</feature>
<feature type="active site" description="Charge relay system" evidence="1">
    <location>
        <position position="78"/>
    </location>
</feature>
<feature type="active site" description="Charge relay system" evidence="1">
    <location>
        <position position="153"/>
    </location>
</feature>
<feature type="active site" description="Acyl-ester intermediate" evidence="1">
    <location>
        <position position="177"/>
    </location>
</feature>
<protein>
    <recommendedName>
        <fullName evidence="1">Glutamyl-tRNA(Gln) amidotransferase subunit A</fullName>
        <shortName evidence="1">Glu-ADT subunit A</shortName>
        <ecNumber evidence="1">6.3.5.7</ecNumber>
    </recommendedName>
</protein>
<evidence type="ECO:0000255" key="1">
    <source>
        <dbReference type="HAMAP-Rule" id="MF_00120"/>
    </source>
</evidence>
<proteinExistence type="inferred from homology"/>
<organism>
    <name type="scientific">Bacillus cereus (strain B4264)</name>
    <dbReference type="NCBI Taxonomy" id="405532"/>
    <lineage>
        <taxon>Bacteria</taxon>
        <taxon>Bacillati</taxon>
        <taxon>Bacillota</taxon>
        <taxon>Bacilli</taxon>
        <taxon>Bacillales</taxon>
        <taxon>Bacillaceae</taxon>
        <taxon>Bacillus</taxon>
        <taxon>Bacillus cereus group</taxon>
    </lineage>
</organism>
<reference key="1">
    <citation type="submission" date="2008-10" db="EMBL/GenBank/DDBJ databases">
        <title>Genome sequence of Bacillus cereus B4264.</title>
        <authorList>
            <person name="Dodson R.J."/>
            <person name="Durkin A.S."/>
            <person name="Rosovitz M.J."/>
            <person name="Rasko D.A."/>
            <person name="Hoffmaster A."/>
            <person name="Ravel J."/>
            <person name="Sutton G."/>
        </authorList>
    </citation>
    <scope>NUCLEOTIDE SEQUENCE [LARGE SCALE GENOMIC DNA]</scope>
    <source>
        <strain>B4264</strain>
    </source>
</reference>
<comment type="function">
    <text evidence="1">Allows the formation of correctly charged Gln-tRNA(Gln) through the transamidation of misacylated Glu-tRNA(Gln) in organisms which lack glutaminyl-tRNA synthetase. The reaction takes place in the presence of glutamine and ATP through an activated gamma-phospho-Glu-tRNA(Gln).</text>
</comment>
<comment type="catalytic activity">
    <reaction evidence="1">
        <text>L-glutamyl-tRNA(Gln) + L-glutamine + ATP + H2O = L-glutaminyl-tRNA(Gln) + L-glutamate + ADP + phosphate + H(+)</text>
        <dbReference type="Rhea" id="RHEA:17521"/>
        <dbReference type="Rhea" id="RHEA-COMP:9681"/>
        <dbReference type="Rhea" id="RHEA-COMP:9684"/>
        <dbReference type="ChEBI" id="CHEBI:15377"/>
        <dbReference type="ChEBI" id="CHEBI:15378"/>
        <dbReference type="ChEBI" id="CHEBI:29985"/>
        <dbReference type="ChEBI" id="CHEBI:30616"/>
        <dbReference type="ChEBI" id="CHEBI:43474"/>
        <dbReference type="ChEBI" id="CHEBI:58359"/>
        <dbReference type="ChEBI" id="CHEBI:78520"/>
        <dbReference type="ChEBI" id="CHEBI:78521"/>
        <dbReference type="ChEBI" id="CHEBI:456216"/>
        <dbReference type="EC" id="6.3.5.7"/>
    </reaction>
</comment>
<comment type="subunit">
    <text evidence="1">Heterotrimer of A, B and C subunits.</text>
</comment>
<comment type="similarity">
    <text evidence="1">Belongs to the amidase family. GatA subfamily.</text>
</comment>
<keyword id="KW-0067">ATP-binding</keyword>
<keyword id="KW-0436">Ligase</keyword>
<keyword id="KW-0547">Nucleotide-binding</keyword>
<keyword id="KW-0648">Protein biosynthesis</keyword>
<gene>
    <name evidence="1" type="primary">gatA</name>
    <name type="ordered locus">BCB4264_A0367</name>
</gene>
<sequence length="485" mass="52321">MSLFDHSVSELHKKLNNKEISVTDLVEESYKRIADVEDNVKAFLTLDEENARAKAKELDAKIGAEDNGLLFGMPIGVKDNIVTNGLRTTCASKMLANFDPIYDATVVQKLKAADTITIGKLNMDEFAMGSSNENSGFYATKNPWNLDYVPGGSSGGSAAAVAAGEVLFSLGSDTGGSIRQPAAYCGVVGLKPTYGRVSRYGLVAFASSLDQIGPITRTVEDNAYLLQAISGIDRMDATSANVEVGNYLAGLTGDVKGLRIAVPKEYLGEGVGEEARESVLAALKVLEGMGATWEEVSLPHSKYALATYYLLSSSEASANLSRFDGVRYGVRSDNVNNLLDLYKNTRSEGFGDEVKRRIMLGTFALSSGYYDAYYKKAQQVRTLIKNDFENVFANYDVIIGPTTPTPAFKVGEKVDDPMTMYANDILTIPVNLAGVPAISVPCGFGANNMPLGLQIIGKHFDEATIYRVAHAFEQATDYHTKKASL</sequence>
<dbReference type="EC" id="6.3.5.7" evidence="1"/>
<dbReference type="EMBL" id="CP001176">
    <property type="protein sequence ID" value="ACK63384.1"/>
    <property type="molecule type" value="Genomic_DNA"/>
</dbReference>
<dbReference type="RefSeq" id="WP_000051441.1">
    <property type="nucleotide sequence ID" value="NZ_VEHB01000009.1"/>
</dbReference>
<dbReference type="SMR" id="B7H4W2"/>
<dbReference type="KEGG" id="bcb:BCB4264_A0367"/>
<dbReference type="HOGENOM" id="CLU_009600_0_3_9"/>
<dbReference type="Proteomes" id="UP000007096">
    <property type="component" value="Chromosome"/>
</dbReference>
<dbReference type="GO" id="GO:0030956">
    <property type="term" value="C:glutamyl-tRNA(Gln) amidotransferase complex"/>
    <property type="evidence" value="ECO:0007669"/>
    <property type="project" value="InterPro"/>
</dbReference>
<dbReference type="GO" id="GO:0005524">
    <property type="term" value="F:ATP binding"/>
    <property type="evidence" value="ECO:0007669"/>
    <property type="project" value="UniProtKB-KW"/>
</dbReference>
<dbReference type="GO" id="GO:0050567">
    <property type="term" value="F:glutaminyl-tRNA synthase (glutamine-hydrolyzing) activity"/>
    <property type="evidence" value="ECO:0007669"/>
    <property type="project" value="UniProtKB-UniRule"/>
</dbReference>
<dbReference type="GO" id="GO:0006412">
    <property type="term" value="P:translation"/>
    <property type="evidence" value="ECO:0007669"/>
    <property type="project" value="UniProtKB-UniRule"/>
</dbReference>
<dbReference type="Gene3D" id="3.90.1300.10">
    <property type="entry name" value="Amidase signature (AS) domain"/>
    <property type="match status" value="1"/>
</dbReference>
<dbReference type="HAMAP" id="MF_00120">
    <property type="entry name" value="GatA"/>
    <property type="match status" value="1"/>
</dbReference>
<dbReference type="InterPro" id="IPR000120">
    <property type="entry name" value="Amidase"/>
</dbReference>
<dbReference type="InterPro" id="IPR020556">
    <property type="entry name" value="Amidase_CS"/>
</dbReference>
<dbReference type="InterPro" id="IPR023631">
    <property type="entry name" value="Amidase_dom"/>
</dbReference>
<dbReference type="InterPro" id="IPR036928">
    <property type="entry name" value="AS_sf"/>
</dbReference>
<dbReference type="InterPro" id="IPR004412">
    <property type="entry name" value="GatA"/>
</dbReference>
<dbReference type="NCBIfam" id="TIGR00132">
    <property type="entry name" value="gatA"/>
    <property type="match status" value="1"/>
</dbReference>
<dbReference type="PANTHER" id="PTHR11895:SF151">
    <property type="entry name" value="GLUTAMYL-TRNA(GLN) AMIDOTRANSFERASE SUBUNIT A"/>
    <property type="match status" value="1"/>
</dbReference>
<dbReference type="PANTHER" id="PTHR11895">
    <property type="entry name" value="TRANSAMIDASE"/>
    <property type="match status" value="1"/>
</dbReference>
<dbReference type="Pfam" id="PF01425">
    <property type="entry name" value="Amidase"/>
    <property type="match status" value="1"/>
</dbReference>
<dbReference type="SUPFAM" id="SSF75304">
    <property type="entry name" value="Amidase signature (AS) enzymes"/>
    <property type="match status" value="1"/>
</dbReference>
<dbReference type="PROSITE" id="PS00571">
    <property type="entry name" value="AMIDASES"/>
    <property type="match status" value="1"/>
</dbReference>
<accession>B7H4W2</accession>